<proteinExistence type="inferred from homology"/>
<comment type="function">
    <text evidence="1">Nucleotidase that shows phosphatase activity on nucleoside 5'-monophosphates.</text>
</comment>
<comment type="catalytic activity">
    <reaction evidence="1">
        <text>a ribonucleoside 5'-phosphate + H2O = a ribonucleoside + phosphate</text>
        <dbReference type="Rhea" id="RHEA:12484"/>
        <dbReference type="ChEBI" id="CHEBI:15377"/>
        <dbReference type="ChEBI" id="CHEBI:18254"/>
        <dbReference type="ChEBI" id="CHEBI:43474"/>
        <dbReference type="ChEBI" id="CHEBI:58043"/>
        <dbReference type="EC" id="3.1.3.5"/>
    </reaction>
</comment>
<comment type="cofactor">
    <cofactor evidence="1">
        <name>a divalent metal cation</name>
        <dbReference type="ChEBI" id="CHEBI:60240"/>
    </cofactor>
    <text evidence="1">Binds 1 divalent metal cation per subunit.</text>
</comment>
<comment type="subcellular location">
    <subcellularLocation>
        <location evidence="1">Cytoplasm</location>
    </subcellularLocation>
</comment>
<comment type="similarity">
    <text evidence="1">Belongs to the SurE nucleotidase family.</text>
</comment>
<gene>
    <name evidence="1" type="primary">surE</name>
    <name type="ordered locus">VV2812</name>
</gene>
<accession>Q7MHQ7</accession>
<name>SURE_VIBVY</name>
<keyword id="KW-0963">Cytoplasm</keyword>
<keyword id="KW-0378">Hydrolase</keyword>
<keyword id="KW-0479">Metal-binding</keyword>
<keyword id="KW-0547">Nucleotide-binding</keyword>
<sequence length="255" mass="28091">MEDKQAKPLRILLSNDDGVFAEGIRTLASELRTLAEVIIVAPDRNRSGASNSLTLEQPLRVTCVEENVYSVQGTPTDCVHFALNELLKNDLPDLVLSGINHGANLGDDVLYSGTVAAAMEGHFLGVQSIAFSLVGKTHFKTAATIAKRIVEQHLAKPIPTNRLLNINIPDLPLEQLEEIRVTRLGARHHAENMIKQLDPRGHEIYWLGPPGKEQDAGEGTDFHTIEQGYVSITPLQVDLTAHESLRAMDTWLKEK</sequence>
<reference key="1">
    <citation type="journal article" date="2003" name="Genome Res.">
        <title>Comparative genome analysis of Vibrio vulnificus, a marine pathogen.</title>
        <authorList>
            <person name="Chen C.-Y."/>
            <person name="Wu K.-M."/>
            <person name="Chang Y.-C."/>
            <person name="Chang C.-H."/>
            <person name="Tsai H.-C."/>
            <person name="Liao T.-L."/>
            <person name="Liu Y.-M."/>
            <person name="Chen H.-J."/>
            <person name="Shen A.B.-T."/>
            <person name="Li J.-C."/>
            <person name="Su T.-L."/>
            <person name="Shao C.-P."/>
            <person name="Lee C.-T."/>
            <person name="Hor L.-I."/>
            <person name="Tsai S.-F."/>
        </authorList>
    </citation>
    <scope>NUCLEOTIDE SEQUENCE [LARGE SCALE GENOMIC DNA]</scope>
    <source>
        <strain>YJ016</strain>
    </source>
</reference>
<protein>
    <recommendedName>
        <fullName evidence="1">5'-nucleotidase SurE</fullName>
        <ecNumber evidence="1">3.1.3.5</ecNumber>
    </recommendedName>
    <alternativeName>
        <fullName evidence="1">Nucleoside 5'-monophosphate phosphohydrolase</fullName>
    </alternativeName>
</protein>
<feature type="chain" id="PRO_0000111852" description="5'-nucleotidase SurE">
    <location>
        <begin position="1"/>
        <end position="255"/>
    </location>
</feature>
<feature type="binding site" evidence="1">
    <location>
        <position position="16"/>
    </location>
    <ligand>
        <name>a divalent metal cation</name>
        <dbReference type="ChEBI" id="CHEBI:60240"/>
    </ligand>
</feature>
<feature type="binding site" evidence="1">
    <location>
        <position position="17"/>
    </location>
    <ligand>
        <name>a divalent metal cation</name>
        <dbReference type="ChEBI" id="CHEBI:60240"/>
    </ligand>
</feature>
<feature type="binding site" evidence="1">
    <location>
        <position position="47"/>
    </location>
    <ligand>
        <name>a divalent metal cation</name>
        <dbReference type="ChEBI" id="CHEBI:60240"/>
    </ligand>
</feature>
<feature type="binding site" evidence="1">
    <location>
        <position position="100"/>
    </location>
    <ligand>
        <name>a divalent metal cation</name>
        <dbReference type="ChEBI" id="CHEBI:60240"/>
    </ligand>
</feature>
<organism>
    <name type="scientific">Vibrio vulnificus (strain YJ016)</name>
    <dbReference type="NCBI Taxonomy" id="196600"/>
    <lineage>
        <taxon>Bacteria</taxon>
        <taxon>Pseudomonadati</taxon>
        <taxon>Pseudomonadota</taxon>
        <taxon>Gammaproteobacteria</taxon>
        <taxon>Vibrionales</taxon>
        <taxon>Vibrionaceae</taxon>
        <taxon>Vibrio</taxon>
    </lineage>
</organism>
<dbReference type="EC" id="3.1.3.5" evidence="1"/>
<dbReference type="EMBL" id="BA000037">
    <property type="protein sequence ID" value="BAC95576.1"/>
    <property type="molecule type" value="Genomic_DNA"/>
</dbReference>
<dbReference type="RefSeq" id="WP_011151150.1">
    <property type="nucleotide sequence ID" value="NC_005139.1"/>
</dbReference>
<dbReference type="SMR" id="Q7MHQ7"/>
<dbReference type="STRING" id="672.VV93_v1c25220"/>
<dbReference type="KEGG" id="vvy:VV2812"/>
<dbReference type="PATRIC" id="fig|196600.6.peg.2802"/>
<dbReference type="eggNOG" id="COG0496">
    <property type="taxonomic scope" value="Bacteria"/>
</dbReference>
<dbReference type="HOGENOM" id="CLU_045192_1_2_6"/>
<dbReference type="Proteomes" id="UP000002675">
    <property type="component" value="Chromosome I"/>
</dbReference>
<dbReference type="GO" id="GO:0005737">
    <property type="term" value="C:cytoplasm"/>
    <property type="evidence" value="ECO:0007669"/>
    <property type="project" value="UniProtKB-SubCell"/>
</dbReference>
<dbReference type="GO" id="GO:0008254">
    <property type="term" value="F:3'-nucleotidase activity"/>
    <property type="evidence" value="ECO:0007669"/>
    <property type="project" value="TreeGrafter"/>
</dbReference>
<dbReference type="GO" id="GO:0008253">
    <property type="term" value="F:5'-nucleotidase activity"/>
    <property type="evidence" value="ECO:0007669"/>
    <property type="project" value="UniProtKB-UniRule"/>
</dbReference>
<dbReference type="GO" id="GO:0004309">
    <property type="term" value="F:exopolyphosphatase activity"/>
    <property type="evidence" value="ECO:0007669"/>
    <property type="project" value="TreeGrafter"/>
</dbReference>
<dbReference type="GO" id="GO:0046872">
    <property type="term" value="F:metal ion binding"/>
    <property type="evidence" value="ECO:0007669"/>
    <property type="project" value="UniProtKB-UniRule"/>
</dbReference>
<dbReference type="GO" id="GO:0000166">
    <property type="term" value="F:nucleotide binding"/>
    <property type="evidence" value="ECO:0007669"/>
    <property type="project" value="UniProtKB-KW"/>
</dbReference>
<dbReference type="FunFam" id="3.40.1210.10:FF:000001">
    <property type="entry name" value="5'/3'-nucleotidase SurE"/>
    <property type="match status" value="1"/>
</dbReference>
<dbReference type="Gene3D" id="3.40.1210.10">
    <property type="entry name" value="Survival protein SurE-like phosphatase/nucleotidase"/>
    <property type="match status" value="1"/>
</dbReference>
<dbReference type="HAMAP" id="MF_00060">
    <property type="entry name" value="SurE"/>
    <property type="match status" value="1"/>
</dbReference>
<dbReference type="InterPro" id="IPR030048">
    <property type="entry name" value="SurE"/>
</dbReference>
<dbReference type="InterPro" id="IPR002828">
    <property type="entry name" value="SurE-like_Pase/nucleotidase"/>
</dbReference>
<dbReference type="InterPro" id="IPR036523">
    <property type="entry name" value="SurE-like_sf"/>
</dbReference>
<dbReference type="NCBIfam" id="NF001489">
    <property type="entry name" value="PRK00346.1-3"/>
    <property type="match status" value="1"/>
</dbReference>
<dbReference type="NCBIfam" id="NF001490">
    <property type="entry name" value="PRK00346.1-4"/>
    <property type="match status" value="1"/>
</dbReference>
<dbReference type="NCBIfam" id="NF001492">
    <property type="entry name" value="PRK00346.2-2"/>
    <property type="match status" value="1"/>
</dbReference>
<dbReference type="NCBIfam" id="TIGR00087">
    <property type="entry name" value="surE"/>
    <property type="match status" value="1"/>
</dbReference>
<dbReference type="PANTHER" id="PTHR30457">
    <property type="entry name" value="5'-NUCLEOTIDASE SURE"/>
    <property type="match status" value="1"/>
</dbReference>
<dbReference type="PANTHER" id="PTHR30457:SF12">
    <property type="entry name" value="5'_3'-NUCLEOTIDASE SURE"/>
    <property type="match status" value="1"/>
</dbReference>
<dbReference type="Pfam" id="PF01975">
    <property type="entry name" value="SurE"/>
    <property type="match status" value="1"/>
</dbReference>
<dbReference type="SUPFAM" id="SSF64167">
    <property type="entry name" value="SurE-like"/>
    <property type="match status" value="1"/>
</dbReference>
<evidence type="ECO:0000255" key="1">
    <source>
        <dbReference type="HAMAP-Rule" id="MF_00060"/>
    </source>
</evidence>